<name>LPLT_SALTY</name>
<protein>
    <recommendedName>
        <fullName evidence="1">Lysophospholipid transporter LplT</fullName>
    </recommendedName>
</protein>
<gene>
    <name evidence="1" type="primary">lplT</name>
    <name type="ordered locus">STM3009</name>
</gene>
<comment type="function">
    <text evidence="1">Catalyzes the facilitated diffusion of 2-acyl-glycero-3-phosphoethanolamine (2-acyl-GPE) into the cell.</text>
</comment>
<comment type="subcellular location">
    <subcellularLocation>
        <location evidence="1">Cell inner membrane</location>
        <topology evidence="1">Multi-pass membrane protein</topology>
    </subcellularLocation>
</comment>
<comment type="similarity">
    <text evidence="1">Belongs to the major facilitator superfamily. LplT (TC 2.A.1.42) family.</text>
</comment>
<proteinExistence type="inferred from homology"/>
<organism>
    <name type="scientific">Salmonella typhimurium (strain LT2 / SGSC1412 / ATCC 700720)</name>
    <dbReference type="NCBI Taxonomy" id="99287"/>
    <lineage>
        <taxon>Bacteria</taxon>
        <taxon>Pseudomonadati</taxon>
        <taxon>Pseudomonadota</taxon>
        <taxon>Gammaproteobacteria</taxon>
        <taxon>Enterobacterales</taxon>
        <taxon>Enterobacteriaceae</taxon>
        <taxon>Salmonella</taxon>
    </lineage>
</organism>
<feature type="chain" id="PRO_0000309833" description="Lysophospholipid transporter LplT">
    <location>
        <begin position="1"/>
        <end position="400"/>
    </location>
</feature>
<feature type="transmembrane region" description="Helical" evidence="1">
    <location>
        <begin position="19"/>
        <end position="39"/>
    </location>
</feature>
<feature type="transmembrane region" description="Helical" evidence="1">
    <location>
        <begin position="53"/>
        <end position="73"/>
    </location>
</feature>
<feature type="transmembrane region" description="Helical" evidence="1">
    <location>
        <begin position="91"/>
        <end position="111"/>
    </location>
</feature>
<feature type="transmembrane region" description="Helical" evidence="1">
    <location>
        <begin position="139"/>
        <end position="159"/>
    </location>
</feature>
<feature type="transmembrane region" description="Helical" evidence="1">
    <location>
        <begin position="164"/>
        <end position="184"/>
    </location>
</feature>
<feature type="transmembrane region" description="Helical" evidence="1">
    <location>
        <begin position="195"/>
        <end position="213"/>
    </location>
</feature>
<feature type="transmembrane region" description="Helical" evidence="1">
    <location>
        <begin position="227"/>
        <end position="247"/>
    </location>
</feature>
<feature type="transmembrane region" description="Helical" evidence="1">
    <location>
        <begin position="257"/>
        <end position="277"/>
    </location>
</feature>
<feature type="transmembrane region" description="Helical" evidence="1">
    <location>
        <begin position="281"/>
        <end position="301"/>
    </location>
</feature>
<feature type="transmembrane region" description="Helical" evidence="1">
    <location>
        <begin position="304"/>
        <end position="324"/>
    </location>
</feature>
<feature type="transmembrane region" description="Helical" evidence="1">
    <location>
        <begin position="352"/>
        <end position="372"/>
    </location>
</feature>
<feature type="transmembrane region" description="Helical" evidence="1">
    <location>
        <begin position="373"/>
        <end position="393"/>
    </location>
</feature>
<keyword id="KW-0997">Cell inner membrane</keyword>
<keyword id="KW-1003">Cell membrane</keyword>
<keyword id="KW-0445">Lipid transport</keyword>
<keyword id="KW-0472">Membrane</keyword>
<keyword id="KW-1185">Reference proteome</keyword>
<keyword id="KW-0812">Transmembrane</keyword>
<keyword id="KW-1133">Transmembrane helix</keyword>
<keyword id="KW-0813">Transport</keyword>
<dbReference type="EMBL" id="AE006468">
    <property type="protein sequence ID" value="AAL21885.1"/>
    <property type="molecule type" value="Genomic_DNA"/>
</dbReference>
<dbReference type="RefSeq" id="WP_000004679.1">
    <property type="nucleotide sequence ID" value="NC_003197.2"/>
</dbReference>
<dbReference type="SMR" id="Q8ZMA5"/>
<dbReference type="STRING" id="99287.STM3009"/>
<dbReference type="PaxDb" id="99287-STM3009"/>
<dbReference type="KEGG" id="stm:STM3009"/>
<dbReference type="PATRIC" id="fig|99287.12.peg.3184"/>
<dbReference type="HOGENOM" id="CLU_047399_0_0_6"/>
<dbReference type="OMA" id="ICFGFNP"/>
<dbReference type="PhylomeDB" id="Q8ZMA5"/>
<dbReference type="BioCyc" id="SENT99287:STM3009-MONOMER"/>
<dbReference type="Proteomes" id="UP000001014">
    <property type="component" value="Chromosome"/>
</dbReference>
<dbReference type="GO" id="GO:0005886">
    <property type="term" value="C:plasma membrane"/>
    <property type="evidence" value="ECO:0007669"/>
    <property type="project" value="UniProtKB-SubCell"/>
</dbReference>
<dbReference type="GO" id="GO:0051978">
    <property type="term" value="F:lysophospholipid:sodium symporter activity"/>
    <property type="evidence" value="ECO:0007669"/>
    <property type="project" value="InterPro"/>
</dbReference>
<dbReference type="CDD" id="cd06173">
    <property type="entry name" value="MFS_MefA_like"/>
    <property type="match status" value="1"/>
</dbReference>
<dbReference type="Gene3D" id="1.20.1250.20">
    <property type="entry name" value="MFS general substrate transporter like domains"/>
    <property type="match status" value="1"/>
</dbReference>
<dbReference type="HAMAP" id="MF_01585">
    <property type="entry name" value="MFS_LplT"/>
    <property type="match status" value="1"/>
</dbReference>
<dbReference type="InterPro" id="IPR023727">
    <property type="entry name" value="LysoPLipid__transptr_LplT"/>
</dbReference>
<dbReference type="InterPro" id="IPR011701">
    <property type="entry name" value="MFS"/>
</dbReference>
<dbReference type="InterPro" id="IPR036259">
    <property type="entry name" value="MFS_trans_sf"/>
</dbReference>
<dbReference type="NCBIfam" id="NF008397">
    <property type="entry name" value="PRK11195.1"/>
    <property type="match status" value="1"/>
</dbReference>
<dbReference type="PANTHER" id="PTHR43266">
    <property type="entry name" value="MACROLIDE-EFFLUX PROTEIN"/>
    <property type="match status" value="1"/>
</dbReference>
<dbReference type="PANTHER" id="PTHR43266:SF2">
    <property type="entry name" value="MAJOR FACILITATOR SUPERFAMILY (MFS) PROFILE DOMAIN-CONTAINING PROTEIN"/>
    <property type="match status" value="1"/>
</dbReference>
<dbReference type="Pfam" id="PF07690">
    <property type="entry name" value="MFS_1"/>
    <property type="match status" value="1"/>
</dbReference>
<dbReference type="SUPFAM" id="SSF103473">
    <property type="entry name" value="MFS general substrate transporter"/>
    <property type="match status" value="1"/>
</dbReference>
<reference key="1">
    <citation type="journal article" date="2001" name="Nature">
        <title>Complete genome sequence of Salmonella enterica serovar Typhimurium LT2.</title>
        <authorList>
            <person name="McClelland M."/>
            <person name="Sanderson K.E."/>
            <person name="Spieth J."/>
            <person name="Clifton S.W."/>
            <person name="Latreille P."/>
            <person name="Courtney L."/>
            <person name="Porwollik S."/>
            <person name="Ali J."/>
            <person name="Dante M."/>
            <person name="Du F."/>
            <person name="Hou S."/>
            <person name="Layman D."/>
            <person name="Leonard S."/>
            <person name="Nguyen C."/>
            <person name="Scott K."/>
            <person name="Holmes A."/>
            <person name="Grewal N."/>
            <person name="Mulvaney E."/>
            <person name="Ryan E."/>
            <person name="Sun H."/>
            <person name="Florea L."/>
            <person name="Miller W."/>
            <person name="Stoneking T."/>
            <person name="Nhan M."/>
            <person name="Waterston R."/>
            <person name="Wilson R.K."/>
        </authorList>
    </citation>
    <scope>NUCLEOTIDE SEQUENCE [LARGE SCALE GENOMIC DNA]</scope>
    <source>
        <strain>LT2 / SGSC1412 / ATCC 700720</strain>
    </source>
</reference>
<accession>Q8ZMA5</accession>
<evidence type="ECO:0000255" key="1">
    <source>
        <dbReference type="HAMAP-Rule" id="MF_01585"/>
    </source>
</evidence>
<sequence>MSESVRTNTSIWSKGMLSVIVAQFLSAFGDNALLFATLALLKAQFYPDWSQPVLQMVFVGAYILFAPFVGQIADSFAKGRVMMVANGLKLAGAAGICLGINPFVGYTLVGIGAAAYSPAKYGILGELTTGDKLVKANGLMEASTIAAILLGSVAGGVLADWHVIAALVACALAYAGAVAANLFIPKLVAARPGQSWRLSAMTRSFFSACVVLWRNGETRFSLVGTGLFWGAGVTLRFLLVLWVPVALGITDNATPTYLNAMVAVGIVVGAGAAAKLVTLETVSRCMPAGILIGVVVAIFSLQHALLPAYALLLLIGMLGGFFVVPLNALLQERGKKSVGAGNAIAVQNLGENSAMLLMLGLYSLAVLVGVPAVAIGIGFGVLFALAIAALWIWQRRQASY</sequence>